<feature type="chain" id="PRO_0000297357" description="3-methyl-2-oxobutanoate hydroxymethyltransferase">
    <location>
        <begin position="1"/>
        <end position="274"/>
    </location>
</feature>
<feature type="active site" description="Proton acceptor" evidence="1">
    <location>
        <position position="187"/>
    </location>
</feature>
<feature type="binding site" evidence="1">
    <location>
        <begin position="49"/>
        <end position="50"/>
    </location>
    <ligand>
        <name>3-methyl-2-oxobutanoate</name>
        <dbReference type="ChEBI" id="CHEBI:11851"/>
    </ligand>
</feature>
<feature type="binding site" evidence="1">
    <location>
        <position position="49"/>
    </location>
    <ligand>
        <name>Mg(2+)</name>
        <dbReference type="ChEBI" id="CHEBI:18420"/>
    </ligand>
</feature>
<feature type="binding site" evidence="1">
    <location>
        <position position="88"/>
    </location>
    <ligand>
        <name>3-methyl-2-oxobutanoate</name>
        <dbReference type="ChEBI" id="CHEBI:11851"/>
    </ligand>
</feature>
<feature type="binding site" evidence="1">
    <location>
        <position position="88"/>
    </location>
    <ligand>
        <name>Mg(2+)</name>
        <dbReference type="ChEBI" id="CHEBI:18420"/>
    </ligand>
</feature>
<feature type="binding site" evidence="1">
    <location>
        <position position="118"/>
    </location>
    <ligand>
        <name>3-methyl-2-oxobutanoate</name>
        <dbReference type="ChEBI" id="CHEBI:11851"/>
    </ligand>
</feature>
<feature type="binding site" evidence="1">
    <location>
        <position position="120"/>
    </location>
    <ligand>
        <name>Mg(2+)</name>
        <dbReference type="ChEBI" id="CHEBI:18420"/>
    </ligand>
</feature>
<reference key="1">
    <citation type="submission" date="2006-03" db="EMBL/GenBank/DDBJ databases">
        <title>Complete sequence of Rhodopseudomonas palustris BisB5.</title>
        <authorList>
            <consortium name="US DOE Joint Genome Institute"/>
            <person name="Copeland A."/>
            <person name="Lucas S."/>
            <person name="Lapidus A."/>
            <person name="Barry K."/>
            <person name="Detter J.C."/>
            <person name="Glavina del Rio T."/>
            <person name="Hammon N."/>
            <person name="Israni S."/>
            <person name="Dalin E."/>
            <person name="Tice H."/>
            <person name="Pitluck S."/>
            <person name="Chain P."/>
            <person name="Malfatti S."/>
            <person name="Shin M."/>
            <person name="Vergez L."/>
            <person name="Schmutz J."/>
            <person name="Larimer F."/>
            <person name="Land M."/>
            <person name="Hauser L."/>
            <person name="Pelletier D.A."/>
            <person name="Kyrpides N."/>
            <person name="Lykidis A."/>
            <person name="Oda Y."/>
            <person name="Harwood C.S."/>
            <person name="Richardson P."/>
        </authorList>
    </citation>
    <scope>NUCLEOTIDE SEQUENCE [LARGE SCALE GENOMIC DNA]</scope>
    <source>
        <strain>BisB5</strain>
    </source>
</reference>
<comment type="function">
    <text evidence="1">Catalyzes the reversible reaction in which hydroxymethyl group from 5,10-methylenetetrahydrofolate is transferred onto alpha-ketoisovalerate to form ketopantoate.</text>
</comment>
<comment type="catalytic activity">
    <reaction evidence="1">
        <text>3-methyl-2-oxobutanoate + (6R)-5,10-methylene-5,6,7,8-tetrahydrofolate + H2O = 2-dehydropantoate + (6S)-5,6,7,8-tetrahydrofolate</text>
        <dbReference type="Rhea" id="RHEA:11824"/>
        <dbReference type="ChEBI" id="CHEBI:11561"/>
        <dbReference type="ChEBI" id="CHEBI:11851"/>
        <dbReference type="ChEBI" id="CHEBI:15377"/>
        <dbReference type="ChEBI" id="CHEBI:15636"/>
        <dbReference type="ChEBI" id="CHEBI:57453"/>
        <dbReference type="EC" id="2.1.2.11"/>
    </reaction>
</comment>
<comment type="cofactor">
    <cofactor evidence="1">
        <name>Mg(2+)</name>
        <dbReference type="ChEBI" id="CHEBI:18420"/>
    </cofactor>
    <text evidence="1">Binds 1 Mg(2+) ion per subunit.</text>
</comment>
<comment type="pathway">
    <text evidence="1">Cofactor biosynthesis; (R)-pantothenate biosynthesis; (R)-pantoate from 3-methyl-2-oxobutanoate: step 1/2.</text>
</comment>
<comment type="subunit">
    <text evidence="1">Homodecamer; pentamer of dimers.</text>
</comment>
<comment type="subcellular location">
    <subcellularLocation>
        <location evidence="1">Cytoplasm</location>
    </subcellularLocation>
</comment>
<comment type="similarity">
    <text evidence="1">Belongs to the PanB family.</text>
</comment>
<proteinExistence type="inferred from homology"/>
<organism>
    <name type="scientific">Rhodopseudomonas palustris (strain BisB5)</name>
    <dbReference type="NCBI Taxonomy" id="316057"/>
    <lineage>
        <taxon>Bacteria</taxon>
        <taxon>Pseudomonadati</taxon>
        <taxon>Pseudomonadota</taxon>
        <taxon>Alphaproteobacteria</taxon>
        <taxon>Hyphomicrobiales</taxon>
        <taxon>Nitrobacteraceae</taxon>
        <taxon>Rhodopseudomonas</taxon>
    </lineage>
</organism>
<gene>
    <name evidence="1" type="primary">panB</name>
    <name type="ordered locus">RPD_3008</name>
</gene>
<protein>
    <recommendedName>
        <fullName evidence="1">3-methyl-2-oxobutanoate hydroxymethyltransferase</fullName>
        <ecNumber evidence="1">2.1.2.11</ecNumber>
    </recommendedName>
    <alternativeName>
        <fullName evidence="1">Ketopantoate hydroxymethyltransferase</fullName>
        <shortName evidence="1">KPHMT</shortName>
    </alternativeName>
</protein>
<accession>Q135K5</accession>
<name>PANB_RHOPS</name>
<evidence type="ECO:0000255" key="1">
    <source>
        <dbReference type="HAMAP-Rule" id="MF_00156"/>
    </source>
</evidence>
<dbReference type="EC" id="2.1.2.11" evidence="1"/>
<dbReference type="EMBL" id="CP000283">
    <property type="protein sequence ID" value="ABE40234.1"/>
    <property type="molecule type" value="Genomic_DNA"/>
</dbReference>
<dbReference type="SMR" id="Q135K5"/>
<dbReference type="STRING" id="316057.RPD_3008"/>
<dbReference type="KEGG" id="rpd:RPD_3008"/>
<dbReference type="eggNOG" id="COG0413">
    <property type="taxonomic scope" value="Bacteria"/>
</dbReference>
<dbReference type="HOGENOM" id="CLU_036645_1_0_5"/>
<dbReference type="BioCyc" id="RPAL316057:RPD_RS15110-MONOMER"/>
<dbReference type="UniPathway" id="UPA00028">
    <property type="reaction ID" value="UER00003"/>
</dbReference>
<dbReference type="Proteomes" id="UP000001818">
    <property type="component" value="Chromosome"/>
</dbReference>
<dbReference type="GO" id="GO:0005737">
    <property type="term" value="C:cytoplasm"/>
    <property type="evidence" value="ECO:0007669"/>
    <property type="project" value="UniProtKB-SubCell"/>
</dbReference>
<dbReference type="GO" id="GO:0003864">
    <property type="term" value="F:3-methyl-2-oxobutanoate hydroxymethyltransferase activity"/>
    <property type="evidence" value="ECO:0007669"/>
    <property type="project" value="UniProtKB-UniRule"/>
</dbReference>
<dbReference type="GO" id="GO:0000287">
    <property type="term" value="F:magnesium ion binding"/>
    <property type="evidence" value="ECO:0007669"/>
    <property type="project" value="TreeGrafter"/>
</dbReference>
<dbReference type="GO" id="GO:0015940">
    <property type="term" value="P:pantothenate biosynthetic process"/>
    <property type="evidence" value="ECO:0007669"/>
    <property type="project" value="UniProtKB-UniRule"/>
</dbReference>
<dbReference type="CDD" id="cd06557">
    <property type="entry name" value="KPHMT-like"/>
    <property type="match status" value="1"/>
</dbReference>
<dbReference type="FunFam" id="3.20.20.60:FF:000003">
    <property type="entry name" value="3-methyl-2-oxobutanoate hydroxymethyltransferase"/>
    <property type="match status" value="1"/>
</dbReference>
<dbReference type="Gene3D" id="3.20.20.60">
    <property type="entry name" value="Phosphoenolpyruvate-binding domains"/>
    <property type="match status" value="1"/>
</dbReference>
<dbReference type="HAMAP" id="MF_00156">
    <property type="entry name" value="PanB"/>
    <property type="match status" value="1"/>
</dbReference>
<dbReference type="InterPro" id="IPR003700">
    <property type="entry name" value="Pantoate_hydroxy_MeTrfase"/>
</dbReference>
<dbReference type="InterPro" id="IPR015813">
    <property type="entry name" value="Pyrv/PenolPyrv_kinase-like_dom"/>
</dbReference>
<dbReference type="InterPro" id="IPR040442">
    <property type="entry name" value="Pyrv_kinase-like_dom_sf"/>
</dbReference>
<dbReference type="NCBIfam" id="TIGR00222">
    <property type="entry name" value="panB"/>
    <property type="match status" value="1"/>
</dbReference>
<dbReference type="NCBIfam" id="NF001452">
    <property type="entry name" value="PRK00311.1"/>
    <property type="match status" value="1"/>
</dbReference>
<dbReference type="PANTHER" id="PTHR20881">
    <property type="entry name" value="3-METHYL-2-OXOBUTANOATE HYDROXYMETHYLTRANSFERASE"/>
    <property type="match status" value="1"/>
</dbReference>
<dbReference type="PANTHER" id="PTHR20881:SF0">
    <property type="entry name" value="3-METHYL-2-OXOBUTANOATE HYDROXYMETHYLTRANSFERASE"/>
    <property type="match status" value="1"/>
</dbReference>
<dbReference type="Pfam" id="PF02548">
    <property type="entry name" value="Pantoate_transf"/>
    <property type="match status" value="1"/>
</dbReference>
<dbReference type="PIRSF" id="PIRSF000388">
    <property type="entry name" value="Pantoate_hydroxy_MeTrfase"/>
    <property type="match status" value="1"/>
</dbReference>
<dbReference type="SUPFAM" id="SSF51621">
    <property type="entry name" value="Phosphoenolpyruvate/pyruvate domain"/>
    <property type="match status" value="1"/>
</dbReference>
<sequence length="274" mass="29201">MSVQSAIKRKTAPDIRARKGGDPIVMLTSYHAHTASLVDRYCDVILVGDSLGNVMHGFETTVPVTLEMMILQGHAVMRGSQHALVVVDMPFGSYEASKEQAFHSAARILKETQCGAVKLEGGVRMAETIAFLTERGIPVMGHIGLTPQSINTLGSFRAQGREEGSWEPIEADARAVSDAGAFSVVVEAVAEPLGRKITETIAIPTIGIGASAACDGQVLVLEDMLGLSPRAPKFVKRYGELGPGIEAAIKGFAEEVRSRAFPGPEHVYGMKTKS</sequence>
<keyword id="KW-0963">Cytoplasm</keyword>
<keyword id="KW-0460">Magnesium</keyword>
<keyword id="KW-0479">Metal-binding</keyword>
<keyword id="KW-0566">Pantothenate biosynthesis</keyword>
<keyword id="KW-0808">Transferase</keyword>